<keyword id="KW-0489">Methyltransferase</keyword>
<keyword id="KW-0808">Transferase</keyword>
<sequence>MSATELFARRATLARSVRLLSEFRFEQSDPARFYGALADDTAAMVADLWQAATETTPGGRTVLDVGGGPGFFAAAFTRRGMEYVGVEPDPREMHAGPAAQVGGRYVRASGTSLPFADGSVDVCLSSNVAEHVPDPWRLGNEMLRVTRPGGLAVLSYTVWLGPFGGHETGLTHYLGGARAADRYTRKHGHRPKNDYGSSLFAVSAHDGLEWAASTGALIAAFPRYHPRWAWWTNAVPGLREFVVSNQVLVLQP</sequence>
<reference key="1">
    <citation type="submission" date="2006-12" db="EMBL/GenBank/DDBJ databases">
        <title>Complete sequence of chromosome of Mycobacterium sp. KMS.</title>
        <authorList>
            <consortium name="US DOE Joint Genome Institute"/>
            <person name="Copeland A."/>
            <person name="Lucas S."/>
            <person name="Lapidus A."/>
            <person name="Barry K."/>
            <person name="Detter J.C."/>
            <person name="Glavina del Rio T."/>
            <person name="Hammon N."/>
            <person name="Israni S."/>
            <person name="Dalin E."/>
            <person name="Tice H."/>
            <person name="Pitluck S."/>
            <person name="Kiss H."/>
            <person name="Brettin T."/>
            <person name="Bruce D."/>
            <person name="Han C."/>
            <person name="Tapia R."/>
            <person name="Gilna P."/>
            <person name="Schmutz J."/>
            <person name="Larimer F."/>
            <person name="Land M."/>
            <person name="Hauser L."/>
            <person name="Kyrpides N."/>
            <person name="Mikhailova N."/>
            <person name="Miller C.D."/>
            <person name="Richardson P."/>
        </authorList>
    </citation>
    <scope>NUCLEOTIDE SEQUENCE [LARGE SCALE GENOMIC DNA]</scope>
    <source>
        <strain>KMS</strain>
    </source>
</reference>
<dbReference type="EC" id="2.1.1.-"/>
<dbReference type="EMBL" id="CP000518">
    <property type="protein sequence ID" value="ABL89445.1"/>
    <property type="molecule type" value="Genomic_DNA"/>
</dbReference>
<dbReference type="SMR" id="A1U9D7"/>
<dbReference type="STRING" id="189918.Mkms_0228"/>
<dbReference type="KEGG" id="mkm:Mkms_0228"/>
<dbReference type="HOGENOM" id="CLU_073035_0_0_11"/>
<dbReference type="OrthoDB" id="3206826at2"/>
<dbReference type="GO" id="GO:0008757">
    <property type="term" value="F:S-adenosylmethionine-dependent methyltransferase activity"/>
    <property type="evidence" value="ECO:0007669"/>
    <property type="project" value="InterPro"/>
</dbReference>
<dbReference type="GO" id="GO:0032259">
    <property type="term" value="P:methylation"/>
    <property type="evidence" value="ECO:0007669"/>
    <property type="project" value="UniProtKB-KW"/>
</dbReference>
<dbReference type="CDD" id="cd02440">
    <property type="entry name" value="AdoMet_MTases"/>
    <property type="match status" value="1"/>
</dbReference>
<dbReference type="Gene3D" id="3.40.50.150">
    <property type="entry name" value="Vaccinia Virus protein VP39"/>
    <property type="match status" value="1"/>
</dbReference>
<dbReference type="InterPro" id="IPR013216">
    <property type="entry name" value="Methyltransf_11"/>
</dbReference>
<dbReference type="InterPro" id="IPR029063">
    <property type="entry name" value="SAM-dependent_MTases_sf"/>
</dbReference>
<dbReference type="PANTHER" id="PTHR43591:SF24">
    <property type="entry name" value="2-METHOXY-6-POLYPRENYL-1,4-BENZOQUINOL METHYLASE, MITOCHONDRIAL"/>
    <property type="match status" value="1"/>
</dbReference>
<dbReference type="PANTHER" id="PTHR43591">
    <property type="entry name" value="METHYLTRANSFERASE"/>
    <property type="match status" value="1"/>
</dbReference>
<dbReference type="Pfam" id="PF08241">
    <property type="entry name" value="Methyltransf_11"/>
    <property type="match status" value="1"/>
</dbReference>
<dbReference type="SUPFAM" id="SSF53335">
    <property type="entry name" value="S-adenosyl-L-methionine-dependent methyltransferases"/>
    <property type="match status" value="1"/>
</dbReference>
<comment type="similarity">
    <text evidence="1">Belongs to the methyltransferase superfamily.</text>
</comment>
<name>Y228_MYCSK</name>
<gene>
    <name type="ordered locus">Mkms_0228</name>
</gene>
<organism>
    <name type="scientific">Mycobacterium sp. (strain KMS)</name>
    <dbReference type="NCBI Taxonomy" id="189918"/>
    <lineage>
        <taxon>Bacteria</taxon>
        <taxon>Bacillati</taxon>
        <taxon>Actinomycetota</taxon>
        <taxon>Actinomycetes</taxon>
        <taxon>Mycobacteriales</taxon>
        <taxon>Mycobacteriaceae</taxon>
        <taxon>Mycobacterium</taxon>
    </lineage>
</organism>
<protein>
    <recommendedName>
        <fullName>Uncharacterized methyltransferase Mkms_0228</fullName>
        <ecNumber>2.1.1.-</ecNumber>
    </recommendedName>
</protein>
<evidence type="ECO:0000305" key="1"/>
<accession>A1U9D7</accession>
<feature type="chain" id="PRO_0000380606" description="Uncharacterized methyltransferase Mkms_0228">
    <location>
        <begin position="1"/>
        <end position="252"/>
    </location>
</feature>
<proteinExistence type="inferred from homology"/>